<gene>
    <name evidence="1" type="primary">thiG</name>
    <name type="ordered locus">Dde_1555</name>
</gene>
<protein>
    <recommendedName>
        <fullName evidence="1">Thiazole synthase</fullName>
        <ecNumber evidence="1">2.8.1.10</ecNumber>
    </recommendedName>
</protein>
<name>THIG_OLEA2</name>
<comment type="function">
    <text evidence="1">Catalyzes the rearrangement of 1-deoxy-D-xylulose 5-phosphate (DXP) to produce the thiazole phosphate moiety of thiamine. Sulfur is provided by the thiocarboxylate moiety of the carrier protein ThiS. In vitro, sulfur can be provided by H(2)S.</text>
</comment>
<comment type="catalytic activity">
    <reaction evidence="1">
        <text>[ThiS sulfur-carrier protein]-C-terminal-Gly-aminoethanethioate + 2-iminoacetate + 1-deoxy-D-xylulose 5-phosphate = [ThiS sulfur-carrier protein]-C-terminal Gly-Gly + 2-[(2R,5Z)-2-carboxy-4-methylthiazol-5(2H)-ylidene]ethyl phosphate + 2 H2O + H(+)</text>
        <dbReference type="Rhea" id="RHEA:26297"/>
        <dbReference type="Rhea" id="RHEA-COMP:12909"/>
        <dbReference type="Rhea" id="RHEA-COMP:19908"/>
        <dbReference type="ChEBI" id="CHEBI:15377"/>
        <dbReference type="ChEBI" id="CHEBI:15378"/>
        <dbReference type="ChEBI" id="CHEBI:57792"/>
        <dbReference type="ChEBI" id="CHEBI:62899"/>
        <dbReference type="ChEBI" id="CHEBI:77846"/>
        <dbReference type="ChEBI" id="CHEBI:90778"/>
        <dbReference type="ChEBI" id="CHEBI:232372"/>
        <dbReference type="EC" id="2.8.1.10"/>
    </reaction>
</comment>
<comment type="pathway">
    <text evidence="1">Cofactor biosynthesis; thiamine diphosphate biosynthesis.</text>
</comment>
<comment type="subunit">
    <text evidence="1">Homotetramer. Forms heterodimers with either ThiH or ThiS.</text>
</comment>
<comment type="subcellular location">
    <subcellularLocation>
        <location evidence="1">Cytoplasm</location>
    </subcellularLocation>
</comment>
<comment type="similarity">
    <text evidence="1">Belongs to the ThiG family.</text>
</comment>
<keyword id="KW-0963">Cytoplasm</keyword>
<keyword id="KW-1185">Reference proteome</keyword>
<keyword id="KW-0704">Schiff base</keyword>
<keyword id="KW-0784">Thiamine biosynthesis</keyword>
<keyword id="KW-0808">Transferase</keyword>
<feature type="chain" id="PRO_0000236339" description="Thiazole synthase">
    <location>
        <begin position="1"/>
        <end position="264"/>
    </location>
</feature>
<feature type="active site" description="Schiff-base intermediate with DXP" evidence="1">
    <location>
        <position position="104"/>
    </location>
</feature>
<feature type="binding site" evidence="1">
    <location>
        <position position="165"/>
    </location>
    <ligand>
        <name>1-deoxy-D-xylulose 5-phosphate</name>
        <dbReference type="ChEBI" id="CHEBI:57792"/>
    </ligand>
</feature>
<feature type="binding site" evidence="1">
    <location>
        <begin position="191"/>
        <end position="192"/>
    </location>
    <ligand>
        <name>1-deoxy-D-xylulose 5-phosphate</name>
        <dbReference type="ChEBI" id="CHEBI:57792"/>
    </ligand>
</feature>
<feature type="binding site" evidence="1">
    <location>
        <begin position="213"/>
        <end position="214"/>
    </location>
    <ligand>
        <name>1-deoxy-D-xylulose 5-phosphate</name>
        <dbReference type="ChEBI" id="CHEBI:57792"/>
    </ligand>
</feature>
<accession>Q311P4</accession>
<evidence type="ECO:0000255" key="1">
    <source>
        <dbReference type="HAMAP-Rule" id="MF_00443"/>
    </source>
</evidence>
<organism>
    <name type="scientific">Oleidesulfovibrio alaskensis (strain ATCC BAA-1058 / DSM 17464 / G20)</name>
    <name type="common">Desulfovibrio alaskensis</name>
    <dbReference type="NCBI Taxonomy" id="207559"/>
    <lineage>
        <taxon>Bacteria</taxon>
        <taxon>Pseudomonadati</taxon>
        <taxon>Thermodesulfobacteriota</taxon>
        <taxon>Desulfovibrionia</taxon>
        <taxon>Desulfovibrionales</taxon>
        <taxon>Desulfovibrionaceae</taxon>
        <taxon>Oleidesulfovibrio</taxon>
    </lineage>
</organism>
<sequence length="264" mass="27573">MEHTTTHNNDPLVLGGRALESRLFIGTGKYGSDSLIPRVAEASGAQVITVALRRVDMQAAAGNVMQHIPQHMQLLPNTSGARTAEEAVRIARLARAAGCGDWIKIEVISDSRYLLPDGYETAKATEILARDGFVVLPYMNPDLYVARDLVSAGAAAVMPLGAPIGTNRGLRTQEMIGILIEEIELPVIVDAGIGRPSQACEAMEMGAAACLVNTAIASAGDPVLMASAFGAAVRAGRRAWLAGTGAVLEGQAQASSPLLGFLDS</sequence>
<dbReference type="EC" id="2.8.1.10" evidence="1"/>
<dbReference type="EMBL" id="CP000112">
    <property type="protein sequence ID" value="ABB38352.1"/>
    <property type="molecule type" value="Genomic_DNA"/>
</dbReference>
<dbReference type="RefSeq" id="WP_011367514.1">
    <property type="nucleotide sequence ID" value="NC_007519.1"/>
</dbReference>
<dbReference type="SMR" id="Q311P4"/>
<dbReference type="STRING" id="207559.Dde_1555"/>
<dbReference type="KEGG" id="dde:Dde_1555"/>
<dbReference type="eggNOG" id="COG2022">
    <property type="taxonomic scope" value="Bacteria"/>
</dbReference>
<dbReference type="HOGENOM" id="CLU_062233_1_0_7"/>
<dbReference type="UniPathway" id="UPA00060"/>
<dbReference type="Proteomes" id="UP000002710">
    <property type="component" value="Chromosome"/>
</dbReference>
<dbReference type="GO" id="GO:0005737">
    <property type="term" value="C:cytoplasm"/>
    <property type="evidence" value="ECO:0007669"/>
    <property type="project" value="UniProtKB-SubCell"/>
</dbReference>
<dbReference type="GO" id="GO:1990107">
    <property type="term" value="F:thiazole synthase activity"/>
    <property type="evidence" value="ECO:0007669"/>
    <property type="project" value="UniProtKB-EC"/>
</dbReference>
<dbReference type="GO" id="GO:0009229">
    <property type="term" value="P:thiamine diphosphate biosynthetic process"/>
    <property type="evidence" value="ECO:0007669"/>
    <property type="project" value="UniProtKB-UniRule"/>
</dbReference>
<dbReference type="CDD" id="cd04728">
    <property type="entry name" value="ThiG"/>
    <property type="match status" value="1"/>
</dbReference>
<dbReference type="Gene3D" id="3.20.20.70">
    <property type="entry name" value="Aldolase class I"/>
    <property type="match status" value="1"/>
</dbReference>
<dbReference type="HAMAP" id="MF_00443">
    <property type="entry name" value="ThiG"/>
    <property type="match status" value="1"/>
</dbReference>
<dbReference type="InterPro" id="IPR013785">
    <property type="entry name" value="Aldolase_TIM"/>
</dbReference>
<dbReference type="InterPro" id="IPR033983">
    <property type="entry name" value="Thiazole_synthase_ThiG"/>
</dbReference>
<dbReference type="InterPro" id="IPR008867">
    <property type="entry name" value="ThiG"/>
</dbReference>
<dbReference type="PANTHER" id="PTHR34266">
    <property type="entry name" value="THIAZOLE SYNTHASE"/>
    <property type="match status" value="1"/>
</dbReference>
<dbReference type="PANTHER" id="PTHR34266:SF2">
    <property type="entry name" value="THIAZOLE SYNTHASE"/>
    <property type="match status" value="1"/>
</dbReference>
<dbReference type="Pfam" id="PF05690">
    <property type="entry name" value="ThiG"/>
    <property type="match status" value="1"/>
</dbReference>
<dbReference type="SUPFAM" id="SSF110399">
    <property type="entry name" value="ThiG-like"/>
    <property type="match status" value="1"/>
</dbReference>
<proteinExistence type="inferred from homology"/>
<reference key="1">
    <citation type="journal article" date="2011" name="J. Bacteriol.">
        <title>Complete genome sequence and updated annotation of Desulfovibrio alaskensis G20.</title>
        <authorList>
            <person name="Hauser L.J."/>
            <person name="Land M.L."/>
            <person name="Brown S.D."/>
            <person name="Larimer F."/>
            <person name="Keller K.L."/>
            <person name="Rapp-Giles B.J."/>
            <person name="Price M.N."/>
            <person name="Lin M."/>
            <person name="Bruce D.C."/>
            <person name="Detter J.C."/>
            <person name="Tapia R."/>
            <person name="Han C.S."/>
            <person name="Goodwin L.A."/>
            <person name="Cheng J.F."/>
            <person name="Pitluck S."/>
            <person name="Copeland A."/>
            <person name="Lucas S."/>
            <person name="Nolan M."/>
            <person name="Lapidus A.L."/>
            <person name="Palumbo A.V."/>
            <person name="Wall J.D."/>
        </authorList>
    </citation>
    <scope>NUCLEOTIDE SEQUENCE [LARGE SCALE GENOMIC DNA]</scope>
    <source>
        <strain>ATCC BAA-1058 / DSM 17464 / G20</strain>
    </source>
</reference>